<sequence>MAHAERTFIAIKPDGVQRGLVGEIIKRFEQKGFRLVAMKFLQASEELLKQHYIDLKDRPFFPGLVKYMNSGPVVAMVWEGLNVVKTGRVMLGETNPADSKPGTIRGDFCIQVGRNIIHGSDSVKSAEKEINLWFKPEELIEYKPCAFDWIYE</sequence>
<accession>Q3T0Q4</accession>
<organism>
    <name type="scientific">Bos taurus</name>
    <name type="common">Bovine</name>
    <dbReference type="NCBI Taxonomy" id="9913"/>
    <lineage>
        <taxon>Eukaryota</taxon>
        <taxon>Metazoa</taxon>
        <taxon>Chordata</taxon>
        <taxon>Craniata</taxon>
        <taxon>Vertebrata</taxon>
        <taxon>Euteleostomi</taxon>
        <taxon>Mammalia</taxon>
        <taxon>Eutheria</taxon>
        <taxon>Laurasiatheria</taxon>
        <taxon>Artiodactyla</taxon>
        <taxon>Ruminantia</taxon>
        <taxon>Pecora</taxon>
        <taxon>Bovidae</taxon>
        <taxon>Bovinae</taxon>
        <taxon>Bos</taxon>
    </lineage>
</organism>
<comment type="function">
    <text evidence="1 2 4">Major role in the synthesis of nucleoside triphosphates other than ATP. The ATP gamma phosphate is transferred to the NDP beta phosphate via a ping-pong mechanism, using a phosphorylated active-site intermediate (By similarity). Negatively regulates Rho activity by interacting with AKAP13/LBC. Acts as a transcriptional activator of the MYC gene; binds DNA non-specifically. Binds to both single-stranded guanine- and cytosine-rich strands within the nuclease hypersensitive element (NHE) III(1) region of the MYC gene promoter. Does not bind to duplex NHE III(1). Has G-quadruplex (G4) DNA-binding activity, which is independent of its nucleotide-binding and kinase activity. Binds both folded and unfolded G4 with similar low nanomolar affinities. Stabilizes folded G4s regardless of whether they are prefolded or not (By similarity). Exhibits histidine protein kinase activity (PubMed:12486123).</text>
</comment>
<comment type="catalytic activity">
    <reaction evidence="1">
        <text>a 2'-deoxyribonucleoside 5'-diphosphate + ATP = a 2'-deoxyribonucleoside 5'-triphosphate + ADP</text>
        <dbReference type="Rhea" id="RHEA:44640"/>
        <dbReference type="ChEBI" id="CHEBI:30616"/>
        <dbReference type="ChEBI" id="CHEBI:61560"/>
        <dbReference type="ChEBI" id="CHEBI:73316"/>
        <dbReference type="ChEBI" id="CHEBI:456216"/>
        <dbReference type="EC" id="2.7.4.6"/>
    </reaction>
</comment>
<comment type="catalytic activity">
    <reaction evidence="1">
        <text>a ribonucleoside 5'-diphosphate + ATP = a ribonucleoside 5'-triphosphate + ADP</text>
        <dbReference type="Rhea" id="RHEA:18113"/>
        <dbReference type="ChEBI" id="CHEBI:30616"/>
        <dbReference type="ChEBI" id="CHEBI:57930"/>
        <dbReference type="ChEBI" id="CHEBI:61557"/>
        <dbReference type="ChEBI" id="CHEBI:456216"/>
        <dbReference type="EC" id="2.7.4.6"/>
    </reaction>
</comment>
<comment type="catalytic activity">
    <reaction evidence="4">
        <text>ATP + protein L-histidine = ADP + protein N-phospho-L-histidine.</text>
        <dbReference type="EC" id="2.7.13.3"/>
    </reaction>
</comment>
<comment type="cofactor">
    <cofactor evidence="1">
        <name>Mg(2+)</name>
        <dbReference type="ChEBI" id="CHEBI:18420"/>
    </cofactor>
</comment>
<comment type="subunit">
    <text evidence="1 3">Hexamer of two different chains: A and B (A6, A5B, A4B2, A3B3, A2B4, AB5, B6) (By similarity). Interacts with CAPN8 (By similarity). Interacts with AKAP13 (By similarity). Interacts with ITGB1BP1 (via C-terminal domain region) (By similarity). Interacts with BCL2L10 (By similarity).</text>
</comment>
<comment type="interaction">
    <interactant intactId="EBI-8577979">
        <id>Q3T0Q4</id>
    </interactant>
    <interactant intactId="EBI-357141">
        <id>P62871</id>
        <label>GNB1</label>
    </interactant>
    <organismsDiffer>false</organismsDiffer>
    <experiments>3</experiments>
</comment>
<comment type="subcellular location">
    <subcellularLocation>
        <location evidence="1">Cytoplasm</location>
    </subcellularLocation>
    <subcellularLocation>
        <location evidence="1">Cell projection</location>
        <location evidence="1">Lamellipodium</location>
    </subcellularLocation>
    <subcellularLocation>
        <location evidence="1">Cell projection</location>
        <location evidence="1">Ruffle</location>
    </subcellularLocation>
    <subcellularLocation>
        <location evidence="1">Nucleus</location>
    </subcellularLocation>
    <text evidence="1">Colocalizes with ITGB1 and ITGB1BP1 at the edge or peripheral ruffles and lamellipodia during the early stages of cell spreading on fibronectin or collagen but not on vitronectin or laminin substrates.</text>
</comment>
<comment type="similarity">
    <text evidence="5">Belongs to the NDK family.</text>
</comment>
<evidence type="ECO:0000250" key="1">
    <source>
        <dbReference type="UniProtKB" id="P22392"/>
    </source>
</evidence>
<evidence type="ECO:0000250" key="2">
    <source>
        <dbReference type="UniProtKB" id="P36010"/>
    </source>
</evidence>
<evidence type="ECO:0000250" key="3">
    <source>
        <dbReference type="UniProtKB" id="Q01768"/>
    </source>
</evidence>
<evidence type="ECO:0000269" key="4">
    <source>
    </source>
</evidence>
<evidence type="ECO:0000305" key="5"/>
<proteinExistence type="evidence at protein level"/>
<protein>
    <recommendedName>
        <fullName>Nucleoside diphosphate kinase B</fullName>
        <shortName>NDK B</shortName>
        <shortName>NDP kinase B</shortName>
        <ecNumber evidence="1">2.7.4.6</ecNumber>
    </recommendedName>
    <alternativeName>
        <fullName>Histidine protein kinase NDKB</fullName>
        <ecNumber evidence="1">2.7.13.3</ecNumber>
    </alternativeName>
</protein>
<keyword id="KW-0067">ATP-binding</keyword>
<keyword id="KW-0966">Cell projection</keyword>
<keyword id="KW-0963">Cytoplasm</keyword>
<keyword id="KW-0238">DNA-binding</keyword>
<keyword id="KW-0418">Kinase</keyword>
<keyword id="KW-0460">Magnesium</keyword>
<keyword id="KW-0479">Metal-binding</keyword>
<keyword id="KW-0546">Nucleotide metabolism</keyword>
<keyword id="KW-0547">Nucleotide-binding</keyword>
<keyword id="KW-0539">Nucleus</keyword>
<keyword id="KW-1185">Reference proteome</keyword>
<keyword id="KW-0804">Transcription</keyword>
<keyword id="KW-0805">Transcription regulation</keyword>
<keyword id="KW-0808">Transferase</keyword>
<dbReference type="EC" id="2.7.4.6" evidence="1"/>
<dbReference type="EC" id="2.7.13.3" evidence="1"/>
<dbReference type="EMBL" id="BC102300">
    <property type="protein sequence ID" value="AAI02301.1"/>
    <property type="molecule type" value="mRNA"/>
</dbReference>
<dbReference type="RefSeq" id="NP_001069844.1">
    <property type="nucleotide sequence ID" value="NM_001076376.2"/>
</dbReference>
<dbReference type="SMR" id="Q3T0Q4"/>
<dbReference type="CORUM" id="Q3T0Q4"/>
<dbReference type="FunCoup" id="Q3T0Q4">
    <property type="interactions" value="2243"/>
</dbReference>
<dbReference type="IntAct" id="Q3T0Q4">
    <property type="interactions" value="1"/>
</dbReference>
<dbReference type="MINT" id="Q3T0Q4"/>
<dbReference type="STRING" id="9913.ENSBTAP00000041066"/>
<dbReference type="PaxDb" id="9913-ENSBTAP00000041066"/>
<dbReference type="PeptideAtlas" id="Q3T0Q4"/>
<dbReference type="Ensembl" id="ENSBTAT00000043502.5">
    <property type="protein sequence ID" value="ENSBTAP00000041066.4"/>
    <property type="gene ID" value="ENSBTAG00000047186.3"/>
</dbReference>
<dbReference type="GeneID" id="615447"/>
<dbReference type="KEGG" id="bta:615447"/>
<dbReference type="CTD" id="4831"/>
<dbReference type="VEuPathDB" id="HostDB:ENSBTAG00000047186"/>
<dbReference type="VGNC" id="VGNC:108102">
    <property type="gene designation" value="NME2"/>
</dbReference>
<dbReference type="eggNOG" id="KOG0888">
    <property type="taxonomic scope" value="Eukaryota"/>
</dbReference>
<dbReference type="GeneTree" id="ENSGT00940000161569"/>
<dbReference type="HOGENOM" id="CLU_060216_6_3_1"/>
<dbReference type="InParanoid" id="Q3T0Q4"/>
<dbReference type="OMA" id="NIWFKAD"/>
<dbReference type="OrthoDB" id="2162449at2759"/>
<dbReference type="Reactome" id="R-BTA-499943">
    <property type="pathway name" value="Interconversion of nucleotide di- and triphosphates"/>
</dbReference>
<dbReference type="Reactome" id="R-BTA-6798695">
    <property type="pathway name" value="Neutrophil degranulation"/>
</dbReference>
<dbReference type="Reactome" id="R-BTA-9748787">
    <property type="pathway name" value="Azathioprine ADME"/>
</dbReference>
<dbReference type="Reactome" id="R-BTA-9755088">
    <property type="pathway name" value="Ribavirin ADME"/>
</dbReference>
<dbReference type="Proteomes" id="UP000009136">
    <property type="component" value="Chromosome 19"/>
</dbReference>
<dbReference type="Bgee" id="ENSBTAG00000047186">
    <property type="expression patterns" value="Expressed in caput epididymis and 107 other cell types or tissues"/>
</dbReference>
<dbReference type="GO" id="GO:0071944">
    <property type="term" value="C:cell periphery"/>
    <property type="evidence" value="ECO:0000250"/>
    <property type="project" value="UniProtKB"/>
</dbReference>
<dbReference type="GO" id="GO:0005737">
    <property type="term" value="C:cytoplasm"/>
    <property type="evidence" value="ECO:0000250"/>
    <property type="project" value="UniProtKB"/>
</dbReference>
<dbReference type="GO" id="GO:0030027">
    <property type="term" value="C:lamellipodium"/>
    <property type="evidence" value="ECO:0000250"/>
    <property type="project" value="UniProtKB"/>
</dbReference>
<dbReference type="GO" id="GO:0005634">
    <property type="term" value="C:nucleus"/>
    <property type="evidence" value="ECO:0007669"/>
    <property type="project" value="UniProtKB-SubCell"/>
</dbReference>
<dbReference type="GO" id="GO:0001726">
    <property type="term" value="C:ruffle"/>
    <property type="evidence" value="ECO:0000250"/>
    <property type="project" value="UniProtKB"/>
</dbReference>
<dbReference type="GO" id="GO:0005524">
    <property type="term" value="F:ATP binding"/>
    <property type="evidence" value="ECO:0007669"/>
    <property type="project" value="UniProtKB-KW"/>
</dbReference>
<dbReference type="GO" id="GO:0003677">
    <property type="term" value="F:DNA binding"/>
    <property type="evidence" value="ECO:0000250"/>
    <property type="project" value="UniProtKB"/>
</dbReference>
<dbReference type="GO" id="GO:0051880">
    <property type="term" value="F:G-quadruplex DNA binding"/>
    <property type="evidence" value="ECO:0000250"/>
    <property type="project" value="UniProtKB"/>
</dbReference>
<dbReference type="GO" id="GO:0019003">
    <property type="term" value="F:GDP binding"/>
    <property type="evidence" value="ECO:0007669"/>
    <property type="project" value="Ensembl"/>
</dbReference>
<dbReference type="GO" id="GO:0042802">
    <property type="term" value="F:identical protein binding"/>
    <property type="evidence" value="ECO:0007669"/>
    <property type="project" value="Ensembl"/>
</dbReference>
<dbReference type="GO" id="GO:0046872">
    <property type="term" value="F:metal ion binding"/>
    <property type="evidence" value="ECO:0007669"/>
    <property type="project" value="UniProtKB-KW"/>
</dbReference>
<dbReference type="GO" id="GO:0004550">
    <property type="term" value="F:nucleoside diphosphate kinase activity"/>
    <property type="evidence" value="ECO:0000250"/>
    <property type="project" value="UniProtKB"/>
</dbReference>
<dbReference type="GO" id="GO:0004673">
    <property type="term" value="F:protein histidine kinase activity"/>
    <property type="evidence" value="ECO:0007669"/>
    <property type="project" value="UniProtKB-EC"/>
</dbReference>
<dbReference type="GO" id="GO:0003713">
    <property type="term" value="F:transcription coactivator activity"/>
    <property type="evidence" value="ECO:0007669"/>
    <property type="project" value="Ensembl"/>
</dbReference>
<dbReference type="GO" id="GO:0006241">
    <property type="term" value="P:CTP biosynthetic process"/>
    <property type="evidence" value="ECO:0007669"/>
    <property type="project" value="InterPro"/>
</dbReference>
<dbReference type="GO" id="GO:0006183">
    <property type="term" value="P:GTP biosynthetic process"/>
    <property type="evidence" value="ECO:0007669"/>
    <property type="project" value="InterPro"/>
</dbReference>
<dbReference type="GO" id="GO:0007229">
    <property type="term" value="P:integrin-mediated signaling pathway"/>
    <property type="evidence" value="ECO:0000250"/>
    <property type="project" value="UniProtKB"/>
</dbReference>
<dbReference type="GO" id="GO:0043066">
    <property type="term" value="P:negative regulation of apoptotic process"/>
    <property type="evidence" value="ECO:0007669"/>
    <property type="project" value="Ensembl"/>
</dbReference>
<dbReference type="GO" id="GO:0009142">
    <property type="term" value="P:nucleoside triphosphate biosynthetic process"/>
    <property type="evidence" value="ECO:0000250"/>
    <property type="project" value="UniProtKB"/>
</dbReference>
<dbReference type="GO" id="GO:0045893">
    <property type="term" value="P:positive regulation of DNA-templated transcription"/>
    <property type="evidence" value="ECO:0000250"/>
    <property type="project" value="UniProtKB"/>
</dbReference>
<dbReference type="GO" id="GO:0050679">
    <property type="term" value="P:positive regulation of epithelial cell proliferation"/>
    <property type="evidence" value="ECO:0007669"/>
    <property type="project" value="Ensembl"/>
</dbReference>
<dbReference type="GO" id="GO:0045618">
    <property type="term" value="P:positive regulation of keratinocyte differentiation"/>
    <property type="evidence" value="ECO:0007669"/>
    <property type="project" value="Ensembl"/>
</dbReference>
<dbReference type="GO" id="GO:0045944">
    <property type="term" value="P:positive regulation of transcription by RNA polymerase II"/>
    <property type="evidence" value="ECO:0000250"/>
    <property type="project" value="UniProtKB"/>
</dbReference>
<dbReference type="GO" id="GO:0042981">
    <property type="term" value="P:regulation of apoptotic process"/>
    <property type="evidence" value="ECO:0000318"/>
    <property type="project" value="GO_Central"/>
</dbReference>
<dbReference type="GO" id="GO:0006228">
    <property type="term" value="P:UTP biosynthetic process"/>
    <property type="evidence" value="ECO:0007669"/>
    <property type="project" value="InterPro"/>
</dbReference>
<dbReference type="CDD" id="cd04413">
    <property type="entry name" value="NDPk_I"/>
    <property type="match status" value="1"/>
</dbReference>
<dbReference type="FunFam" id="3.30.70.141:FF:000015">
    <property type="entry name" value="Nucleoside diphosphate kinase B"/>
    <property type="match status" value="1"/>
</dbReference>
<dbReference type="Gene3D" id="3.30.70.141">
    <property type="entry name" value="Nucleoside diphosphate kinase-like domain"/>
    <property type="match status" value="1"/>
</dbReference>
<dbReference type="HAMAP" id="MF_00451">
    <property type="entry name" value="NDP_kinase"/>
    <property type="match status" value="1"/>
</dbReference>
<dbReference type="InterPro" id="IPR034907">
    <property type="entry name" value="NDK-like_dom"/>
</dbReference>
<dbReference type="InterPro" id="IPR036850">
    <property type="entry name" value="NDK-like_dom_sf"/>
</dbReference>
<dbReference type="InterPro" id="IPR001564">
    <property type="entry name" value="Nucleoside_diP_kinase"/>
</dbReference>
<dbReference type="InterPro" id="IPR023005">
    <property type="entry name" value="Nucleoside_diP_kinase_AS"/>
</dbReference>
<dbReference type="NCBIfam" id="NF001908">
    <property type="entry name" value="PRK00668.1"/>
    <property type="match status" value="1"/>
</dbReference>
<dbReference type="PANTHER" id="PTHR11349">
    <property type="entry name" value="NUCLEOSIDE DIPHOSPHATE KINASE"/>
    <property type="match status" value="1"/>
</dbReference>
<dbReference type="Pfam" id="PF00334">
    <property type="entry name" value="NDK"/>
    <property type="match status" value="1"/>
</dbReference>
<dbReference type="PRINTS" id="PR01243">
    <property type="entry name" value="NUCDPKINASE"/>
</dbReference>
<dbReference type="SMART" id="SM00562">
    <property type="entry name" value="NDK"/>
    <property type="match status" value="1"/>
</dbReference>
<dbReference type="SUPFAM" id="SSF54919">
    <property type="entry name" value="Nucleoside diphosphate kinase, NDK"/>
    <property type="match status" value="1"/>
</dbReference>
<dbReference type="PROSITE" id="PS00469">
    <property type="entry name" value="NDPK"/>
    <property type="match status" value="1"/>
</dbReference>
<dbReference type="PROSITE" id="PS51374">
    <property type="entry name" value="NDPK_LIKE"/>
    <property type="match status" value="1"/>
</dbReference>
<feature type="chain" id="PRO_0000250199" description="Nucleoside diphosphate kinase B">
    <location>
        <begin position="1"/>
        <end position="152"/>
    </location>
</feature>
<feature type="region of interest" description="Interaction with AKAP13" evidence="1">
    <location>
        <begin position="1"/>
        <end position="66"/>
    </location>
</feature>
<feature type="active site" description="Pros-phosphohistidine intermediate" evidence="1">
    <location>
        <position position="118"/>
    </location>
</feature>
<feature type="binding site" evidence="1">
    <location>
        <position position="12"/>
    </location>
    <ligand>
        <name>ATP</name>
        <dbReference type="ChEBI" id="CHEBI:30616"/>
    </ligand>
</feature>
<feature type="binding site" evidence="1">
    <location>
        <position position="60"/>
    </location>
    <ligand>
        <name>ATP</name>
        <dbReference type="ChEBI" id="CHEBI:30616"/>
    </ligand>
</feature>
<feature type="binding site" evidence="1">
    <location>
        <position position="88"/>
    </location>
    <ligand>
        <name>ATP</name>
        <dbReference type="ChEBI" id="CHEBI:30616"/>
    </ligand>
</feature>
<feature type="binding site" evidence="1">
    <location>
        <position position="94"/>
    </location>
    <ligand>
        <name>ATP</name>
        <dbReference type="ChEBI" id="CHEBI:30616"/>
    </ligand>
</feature>
<feature type="binding site" evidence="1">
    <location>
        <position position="105"/>
    </location>
    <ligand>
        <name>ATP</name>
        <dbReference type="ChEBI" id="CHEBI:30616"/>
    </ligand>
</feature>
<feature type="binding site" evidence="1">
    <location>
        <position position="115"/>
    </location>
    <ligand>
        <name>ATP</name>
        <dbReference type="ChEBI" id="CHEBI:30616"/>
    </ligand>
</feature>
<name>NDKB_BOVIN</name>
<reference key="1">
    <citation type="submission" date="2005-08" db="EMBL/GenBank/DDBJ databases">
        <authorList>
            <consortium name="NIH - Mammalian Gene Collection (MGC) project"/>
        </authorList>
    </citation>
    <scope>NUCLEOTIDE SEQUENCE [LARGE SCALE MRNA]</scope>
    <source>
        <strain>Crossbred X Angus</strain>
        <tissue>Ileum</tissue>
    </source>
</reference>
<reference key="2">
    <citation type="journal article" date="2003" name="J. Biol. Chem.">
        <title>Activation of heterotrimeric G proteins by a high energy phosphate transfer via nucleoside diphosphate kinase (NDPK) B and Gbeta subunits. Complex formation of NDPK B with Gbeta gamma dimers and phosphorylation of His-266 IN Gbeta.</title>
        <authorList>
            <person name="Cuello F."/>
            <person name="Schulze R.A."/>
            <person name="Heemeyer F."/>
            <person name="Meyer H.E."/>
            <person name="Lutz S."/>
            <person name="Jakobs K.H."/>
            <person name="Niroomand F."/>
            <person name="Wieland T."/>
        </authorList>
    </citation>
    <scope>FUNCTION AS HISTIDINE PROTEIN KINASE</scope>
</reference>
<gene>
    <name type="primary">NME2</name>
</gene>